<gene>
    <name type="primary">yggC</name>
    <name type="ordered locus">b2928</name>
    <name type="ordered locus">JW2895</name>
</gene>
<evidence type="ECO:0000255" key="1"/>
<evidence type="ECO:0000305" key="2"/>
<accession>P11664</accession>
<accession>Q2M9R4</accession>
<keyword id="KW-0067">ATP-binding</keyword>
<keyword id="KW-0418">Kinase</keyword>
<keyword id="KW-0547">Nucleotide-binding</keyword>
<keyword id="KW-1185">Reference proteome</keyword>
<keyword id="KW-0808">Transferase</keyword>
<reference key="1">
    <citation type="journal article" date="1989" name="Mol. Microbiol.">
        <title>Identification, molecular cloning and sequence analysis of a gene cluster encoding the class II fructose 1,6-bisphosphate aldolase, 3-phosphoglycerate kinase and a putative second glyceraldehyde 3-phosphate dehydrogenase of Escherichia coli.</title>
        <authorList>
            <person name="Alefounder P.R."/>
            <person name="Perham R.N."/>
        </authorList>
    </citation>
    <scope>NUCLEOTIDE SEQUENCE [GENOMIC DNA]</scope>
    <source>
        <strain>K12 / CS520</strain>
    </source>
</reference>
<reference key="2">
    <citation type="journal article" date="1997" name="Science">
        <title>The complete genome sequence of Escherichia coli K-12.</title>
        <authorList>
            <person name="Blattner F.R."/>
            <person name="Plunkett G. III"/>
            <person name="Bloch C.A."/>
            <person name="Perna N.T."/>
            <person name="Burland V."/>
            <person name="Riley M."/>
            <person name="Collado-Vides J."/>
            <person name="Glasner J.D."/>
            <person name="Rode C.K."/>
            <person name="Mayhew G.F."/>
            <person name="Gregor J."/>
            <person name="Davis N.W."/>
            <person name="Kirkpatrick H.A."/>
            <person name="Goeden M.A."/>
            <person name="Rose D.J."/>
            <person name="Mau B."/>
            <person name="Shao Y."/>
        </authorList>
    </citation>
    <scope>NUCLEOTIDE SEQUENCE [LARGE SCALE GENOMIC DNA]</scope>
    <source>
        <strain>K12 / MG1655 / ATCC 47076</strain>
    </source>
</reference>
<reference key="3">
    <citation type="journal article" date="2006" name="Mol. Syst. Biol.">
        <title>Highly accurate genome sequences of Escherichia coli K-12 strains MG1655 and W3110.</title>
        <authorList>
            <person name="Hayashi K."/>
            <person name="Morooka N."/>
            <person name="Yamamoto Y."/>
            <person name="Fujita K."/>
            <person name="Isono K."/>
            <person name="Choi S."/>
            <person name="Ohtsubo E."/>
            <person name="Baba T."/>
            <person name="Wanner B.L."/>
            <person name="Mori H."/>
            <person name="Horiuchi T."/>
        </authorList>
    </citation>
    <scope>NUCLEOTIDE SEQUENCE [LARGE SCALE GENOMIC DNA]</scope>
    <source>
        <strain>K12 / W3110 / ATCC 27325 / DSM 5911</strain>
    </source>
</reference>
<comment type="sequence caution" evidence="2">
    <conflict type="erroneous initiation">
        <sequence resource="EMBL-CDS" id="CAA32602"/>
    </conflict>
</comment>
<organism>
    <name type="scientific">Escherichia coli (strain K12)</name>
    <dbReference type="NCBI Taxonomy" id="83333"/>
    <lineage>
        <taxon>Bacteria</taxon>
        <taxon>Pseudomonadati</taxon>
        <taxon>Pseudomonadota</taxon>
        <taxon>Gammaproteobacteria</taxon>
        <taxon>Enterobacterales</taxon>
        <taxon>Enterobacteriaceae</taxon>
        <taxon>Escherichia</taxon>
    </lineage>
</organism>
<proteinExistence type="predicted"/>
<name>YGGC_ECOLI</name>
<sequence length="237" mass="27132">MKIELTVNGLKIQAQYQNEEIENVHKPLLHMLAALQTVNPQRRTVVFLCAPPGTGKSTLTTFWEYLAQQDPELPAIQTLPMDGFHHYNSWLDAHQLRPFKGAPETFDVAKLTENLRQVVEGDCTWPQYDRQKHDPVEDALHVTAPLVIVEGNWLLLDDEKWLELASFCDFSIFIHAPAQILRERLISRKIAGGLTRQVAEAFYARTDGPNVERVLMNSRQANLIVEMTEEGRYHFTS</sequence>
<dbReference type="EMBL" id="X14436">
    <property type="protein sequence ID" value="CAA32602.1"/>
    <property type="status" value="ALT_INIT"/>
    <property type="molecule type" value="Genomic_DNA"/>
</dbReference>
<dbReference type="EMBL" id="U28377">
    <property type="protein sequence ID" value="AAA69095.1"/>
    <property type="molecule type" value="Genomic_DNA"/>
</dbReference>
<dbReference type="EMBL" id="U00096">
    <property type="protein sequence ID" value="AAC75965.1"/>
    <property type="molecule type" value="Genomic_DNA"/>
</dbReference>
<dbReference type="EMBL" id="AP009048">
    <property type="protein sequence ID" value="BAE76992.1"/>
    <property type="molecule type" value="Genomic_DNA"/>
</dbReference>
<dbReference type="PIR" id="G65077">
    <property type="entry name" value="QQEC3B"/>
</dbReference>
<dbReference type="RefSeq" id="NP_417403.1">
    <property type="nucleotide sequence ID" value="NC_000913.3"/>
</dbReference>
<dbReference type="RefSeq" id="WP_000687705.1">
    <property type="nucleotide sequence ID" value="NZ_SSZK01000003.1"/>
</dbReference>
<dbReference type="SMR" id="P11664"/>
<dbReference type="BioGRID" id="4262332">
    <property type="interactions" value="124"/>
</dbReference>
<dbReference type="FunCoup" id="P11664">
    <property type="interactions" value="54"/>
</dbReference>
<dbReference type="IntAct" id="P11664">
    <property type="interactions" value="1"/>
</dbReference>
<dbReference type="STRING" id="511145.b2928"/>
<dbReference type="PaxDb" id="511145-b2928"/>
<dbReference type="EnsemblBacteria" id="AAC75965">
    <property type="protein sequence ID" value="AAC75965"/>
    <property type="gene ID" value="b2928"/>
</dbReference>
<dbReference type="GeneID" id="947419"/>
<dbReference type="KEGG" id="ecj:JW2895"/>
<dbReference type="KEGG" id="eco:b2928"/>
<dbReference type="KEGG" id="ecoc:C3026_16040"/>
<dbReference type="PATRIC" id="fig|511145.12.peg.3023"/>
<dbReference type="EchoBASE" id="EB1150"/>
<dbReference type="eggNOG" id="COG1072">
    <property type="taxonomic scope" value="Bacteria"/>
</dbReference>
<dbReference type="HOGENOM" id="CLU_067202_2_0_6"/>
<dbReference type="InParanoid" id="P11664"/>
<dbReference type="OMA" id="EVWFVEV"/>
<dbReference type="OrthoDB" id="1550976at2"/>
<dbReference type="PhylomeDB" id="P11664"/>
<dbReference type="BioCyc" id="EcoCyc:EG11161-MONOMER"/>
<dbReference type="PRO" id="PR:P11664"/>
<dbReference type="Proteomes" id="UP000000625">
    <property type="component" value="Chromosome"/>
</dbReference>
<dbReference type="GO" id="GO:0005524">
    <property type="term" value="F:ATP binding"/>
    <property type="evidence" value="ECO:0007669"/>
    <property type="project" value="UniProtKB-KW"/>
</dbReference>
<dbReference type="GO" id="GO:0016301">
    <property type="term" value="F:kinase activity"/>
    <property type="evidence" value="ECO:0007669"/>
    <property type="project" value="UniProtKB-KW"/>
</dbReference>
<dbReference type="Gene3D" id="3.40.50.300">
    <property type="entry name" value="P-loop containing nucleotide triphosphate hydrolases"/>
    <property type="match status" value="1"/>
</dbReference>
<dbReference type="InterPro" id="IPR027417">
    <property type="entry name" value="P-loop_NTPase"/>
</dbReference>
<dbReference type="NCBIfam" id="NF006742">
    <property type="entry name" value="PRK09270.1-1"/>
    <property type="match status" value="1"/>
</dbReference>
<dbReference type="NCBIfam" id="NF006745">
    <property type="entry name" value="PRK09270.1-4"/>
    <property type="match status" value="1"/>
</dbReference>
<dbReference type="PANTHER" id="PTHR10285">
    <property type="entry name" value="URIDINE KINASE"/>
    <property type="match status" value="1"/>
</dbReference>
<dbReference type="SUPFAM" id="SSF52540">
    <property type="entry name" value="P-loop containing nucleoside triphosphate hydrolases"/>
    <property type="match status" value="1"/>
</dbReference>
<feature type="chain" id="PRO_0000169362" description="Uncharacterized protein YggC">
    <location>
        <begin position="1"/>
        <end position="237"/>
    </location>
</feature>
<feature type="binding site" evidence="1">
    <location>
        <begin position="50"/>
        <end position="57"/>
    </location>
    <ligand>
        <name>ATP</name>
        <dbReference type="ChEBI" id="CHEBI:30616"/>
    </ligand>
</feature>
<protein>
    <recommendedName>
        <fullName>Uncharacterized protein YggC</fullName>
    </recommendedName>
</protein>